<evidence type="ECO:0000250" key="1">
    <source>
        <dbReference type="UniProtKB" id="P26391"/>
    </source>
</evidence>
<evidence type="ECO:0000250" key="2">
    <source>
        <dbReference type="UniProtKB" id="P27830"/>
    </source>
</evidence>
<evidence type="ECO:0000250" key="3">
    <source>
        <dbReference type="UniProtKB" id="P37759"/>
    </source>
</evidence>
<evidence type="ECO:0000305" key="4"/>
<proteinExistence type="inferred from homology"/>
<protein>
    <recommendedName>
        <fullName evidence="2">dTDP-glucose 4,6-dehydratase</fullName>
        <ecNumber evidence="2">4.2.1.46</ecNumber>
    </recommendedName>
</protein>
<accession>P37777</accession>
<accession>Q54162</accession>
<organism>
    <name type="scientific">Shigella flexneri</name>
    <dbReference type="NCBI Taxonomy" id="623"/>
    <lineage>
        <taxon>Bacteria</taxon>
        <taxon>Pseudomonadati</taxon>
        <taxon>Pseudomonadota</taxon>
        <taxon>Gammaproteobacteria</taxon>
        <taxon>Enterobacterales</taxon>
        <taxon>Enterobacteriaceae</taxon>
        <taxon>Shigella</taxon>
    </lineage>
</organism>
<dbReference type="EC" id="4.2.1.46" evidence="2"/>
<dbReference type="EMBL" id="X71970">
    <property type="protein sequence ID" value="CAA50767.1"/>
    <property type="molecule type" value="Genomic_DNA"/>
</dbReference>
<dbReference type="EMBL" id="L14842">
    <property type="protein sequence ID" value="AAA53679.1"/>
    <property type="molecule type" value="Genomic_DNA"/>
</dbReference>
<dbReference type="EMBL" id="AE005674">
    <property type="protein sequence ID" value="AAN43643.1"/>
    <property type="molecule type" value="Genomic_DNA"/>
</dbReference>
<dbReference type="EMBL" id="AE014073">
    <property type="protein sequence ID" value="AAP17472.1"/>
    <property type="molecule type" value="Genomic_DNA"/>
</dbReference>
<dbReference type="PIR" id="S41534">
    <property type="entry name" value="S41534"/>
</dbReference>
<dbReference type="RefSeq" id="NP_707936.1">
    <property type="nucleotide sequence ID" value="NC_004337.2"/>
</dbReference>
<dbReference type="RefSeq" id="WP_000699404.1">
    <property type="nucleotide sequence ID" value="NZ_WPGW01000076.1"/>
</dbReference>
<dbReference type="SMR" id="P37777"/>
<dbReference type="STRING" id="198214.SF2104"/>
<dbReference type="PaxDb" id="198214-SF2104"/>
<dbReference type="GeneID" id="1025931"/>
<dbReference type="KEGG" id="sfl:SF2104"/>
<dbReference type="KEGG" id="sfx:S2227"/>
<dbReference type="PATRIC" id="fig|198214.7.peg.2512"/>
<dbReference type="HOGENOM" id="CLU_007383_1_14_6"/>
<dbReference type="UniPathway" id="UPA00124"/>
<dbReference type="UniPathway" id="UPA00281"/>
<dbReference type="Proteomes" id="UP000001006">
    <property type="component" value="Chromosome"/>
</dbReference>
<dbReference type="Proteomes" id="UP000002673">
    <property type="component" value="Chromosome"/>
</dbReference>
<dbReference type="GO" id="GO:0008460">
    <property type="term" value="F:dTDP-glucose 4,6-dehydratase activity"/>
    <property type="evidence" value="ECO:0000250"/>
    <property type="project" value="UniProtKB"/>
</dbReference>
<dbReference type="GO" id="GO:0019305">
    <property type="term" value="P:dTDP-rhamnose biosynthetic process"/>
    <property type="evidence" value="ECO:0007669"/>
    <property type="project" value="UniProtKB-UniPathway"/>
</dbReference>
<dbReference type="GO" id="GO:0009103">
    <property type="term" value="P:lipopolysaccharide biosynthetic process"/>
    <property type="evidence" value="ECO:0000250"/>
    <property type="project" value="UniProtKB"/>
</dbReference>
<dbReference type="GO" id="GO:0009243">
    <property type="term" value="P:O antigen biosynthetic process"/>
    <property type="evidence" value="ECO:0007669"/>
    <property type="project" value="UniProtKB-UniPathway"/>
</dbReference>
<dbReference type="GO" id="GO:0000271">
    <property type="term" value="P:polysaccharide biosynthetic process"/>
    <property type="evidence" value="ECO:0000250"/>
    <property type="project" value="UniProtKB"/>
</dbReference>
<dbReference type="CDD" id="cd05246">
    <property type="entry name" value="dTDP_GD_SDR_e"/>
    <property type="match status" value="1"/>
</dbReference>
<dbReference type="FunFam" id="3.40.50.720:FF:000108">
    <property type="entry name" value="dTDP-glucose 4,6-dehydratase"/>
    <property type="match status" value="1"/>
</dbReference>
<dbReference type="Gene3D" id="3.40.50.720">
    <property type="entry name" value="NAD(P)-binding Rossmann-like Domain"/>
    <property type="match status" value="1"/>
</dbReference>
<dbReference type="Gene3D" id="3.90.25.10">
    <property type="entry name" value="UDP-galactose 4-epimerase, domain 1"/>
    <property type="match status" value="1"/>
</dbReference>
<dbReference type="InterPro" id="IPR005888">
    <property type="entry name" value="dTDP_Gluc_deHydtase"/>
</dbReference>
<dbReference type="InterPro" id="IPR016040">
    <property type="entry name" value="NAD(P)-bd_dom"/>
</dbReference>
<dbReference type="InterPro" id="IPR036291">
    <property type="entry name" value="NAD(P)-bd_dom_sf"/>
</dbReference>
<dbReference type="NCBIfam" id="TIGR01181">
    <property type="entry name" value="dTDP_gluc_dehyt"/>
    <property type="match status" value="1"/>
</dbReference>
<dbReference type="NCBIfam" id="NF007490">
    <property type="entry name" value="PRK10084.1"/>
    <property type="match status" value="1"/>
</dbReference>
<dbReference type="PANTHER" id="PTHR43000">
    <property type="entry name" value="DTDP-D-GLUCOSE 4,6-DEHYDRATASE-RELATED"/>
    <property type="match status" value="1"/>
</dbReference>
<dbReference type="Pfam" id="PF16363">
    <property type="entry name" value="GDP_Man_Dehyd"/>
    <property type="match status" value="1"/>
</dbReference>
<dbReference type="SUPFAM" id="SSF51735">
    <property type="entry name" value="NAD(P)-binding Rossmann-fold domains"/>
    <property type="match status" value="1"/>
</dbReference>
<comment type="function">
    <text evidence="2">Catalyzes the dehydration of dTDP-D-glucose to form dTDP-6-deoxy-D-xylo-4-hexulose via a three-step process involving oxidation, dehydration and reduction.</text>
</comment>
<comment type="catalytic activity">
    <reaction evidence="2">
        <text>dTDP-alpha-D-glucose = dTDP-4-dehydro-6-deoxy-alpha-D-glucose + H2O</text>
        <dbReference type="Rhea" id="RHEA:17221"/>
        <dbReference type="ChEBI" id="CHEBI:15377"/>
        <dbReference type="ChEBI" id="CHEBI:57477"/>
        <dbReference type="ChEBI" id="CHEBI:57649"/>
        <dbReference type="EC" id="4.2.1.46"/>
    </reaction>
</comment>
<comment type="cofactor">
    <cofactor evidence="2">
        <name>NAD(+)</name>
        <dbReference type="ChEBI" id="CHEBI:57540"/>
    </cofactor>
    <text evidence="2">Binds 1 NAD(+) per subunit.</text>
</comment>
<comment type="pathway">
    <text evidence="3">Carbohydrate biosynthesis; dTDP-L-rhamnose biosynthesis.</text>
</comment>
<comment type="pathway">
    <text evidence="3">Bacterial outer membrane biogenesis; LPS O-antigen biosynthesis.</text>
</comment>
<comment type="subunit">
    <text evidence="2">Homodimer.</text>
</comment>
<comment type="similarity">
    <text evidence="2">Belongs to the NAD(P)-dependent epimerase/dehydratase family. dTDP-glucose dehydratase subfamily.</text>
</comment>
<reference key="1">
    <citation type="journal article" date="1994" name="Mol. Microbiol.">
        <title>Characterization of the dTDP-rhamnose biosynthetic genes encoded in the rfb locus of Shigella flexneri.</title>
        <authorList>
            <person name="Macpherson D.F."/>
            <person name="Manning P.A."/>
            <person name="Morona R."/>
        </authorList>
    </citation>
    <scope>NUCLEOTIDE SEQUENCE [GENOMIC DNA]</scope>
    <source>
        <strain>PE577 / Serotype 2a</strain>
    </source>
</reference>
<reference key="2">
    <citation type="journal article" date="1994" name="J. Bacteriol.">
        <title>Nucleotide sequence of the rhamnose biosynthetic operon of Shigella flexneri 2a and role of lipopolysaccharide in virulence.</title>
        <authorList>
            <person name="Rajakumar K."/>
            <person name="Jost B.H."/>
            <person name="Sasakawa C."/>
            <person name="Okada N."/>
            <person name="Yoshikawa M."/>
            <person name="Adler B."/>
        </authorList>
    </citation>
    <scope>NUCLEOTIDE SEQUENCE [GENOMIC DNA]</scope>
    <source>
        <strain>YSH6200 / Serotype 2a</strain>
    </source>
</reference>
<reference key="3">
    <citation type="journal article" date="2002" name="Nucleic Acids Res.">
        <title>Genome sequence of Shigella flexneri 2a: insights into pathogenicity through comparison with genomes of Escherichia coli K12 and O157.</title>
        <authorList>
            <person name="Jin Q."/>
            <person name="Yuan Z."/>
            <person name="Xu J."/>
            <person name="Wang Y."/>
            <person name="Shen Y."/>
            <person name="Lu W."/>
            <person name="Wang J."/>
            <person name="Liu H."/>
            <person name="Yang J."/>
            <person name="Yang F."/>
            <person name="Zhang X."/>
            <person name="Zhang J."/>
            <person name="Yang G."/>
            <person name="Wu H."/>
            <person name="Qu D."/>
            <person name="Dong J."/>
            <person name="Sun L."/>
            <person name="Xue Y."/>
            <person name="Zhao A."/>
            <person name="Gao Y."/>
            <person name="Zhu J."/>
            <person name="Kan B."/>
            <person name="Ding K."/>
            <person name="Chen S."/>
            <person name="Cheng H."/>
            <person name="Yao Z."/>
            <person name="He B."/>
            <person name="Chen R."/>
            <person name="Ma D."/>
            <person name="Qiang B."/>
            <person name="Wen Y."/>
            <person name="Hou Y."/>
            <person name="Yu J."/>
        </authorList>
    </citation>
    <scope>NUCLEOTIDE SEQUENCE [LARGE SCALE GENOMIC DNA]</scope>
    <source>
        <strain>301 / Serotype 2a</strain>
    </source>
</reference>
<reference key="4">
    <citation type="journal article" date="2003" name="Infect. Immun.">
        <title>Complete genome sequence and comparative genomics of Shigella flexneri serotype 2a strain 2457T.</title>
        <authorList>
            <person name="Wei J."/>
            <person name="Goldberg M.B."/>
            <person name="Burland V."/>
            <person name="Venkatesan M.M."/>
            <person name="Deng W."/>
            <person name="Fournier G."/>
            <person name="Mayhew G.F."/>
            <person name="Plunkett G. III"/>
            <person name="Rose D.J."/>
            <person name="Darling A."/>
            <person name="Mau B."/>
            <person name="Perna N.T."/>
            <person name="Payne S.M."/>
            <person name="Runyen-Janecky L.J."/>
            <person name="Zhou S."/>
            <person name="Schwartz D.C."/>
            <person name="Blattner F.R."/>
        </authorList>
    </citation>
    <scope>NUCLEOTIDE SEQUENCE [LARGE SCALE GENOMIC DNA]</scope>
    <source>
        <strain>ATCC 700930 / 2457T / Serotype 2a</strain>
    </source>
</reference>
<gene>
    <name type="primary">rfbB</name>
    <name type="ordered locus">SF2104</name>
    <name type="ordered locus">S2227</name>
</gene>
<feature type="chain" id="PRO_0000183244" description="dTDP-glucose 4,6-dehydratase">
    <location>
        <begin position="1"/>
        <end position="361"/>
    </location>
</feature>
<feature type="active site" description="Proton donor" evidence="2">
    <location>
        <position position="134"/>
    </location>
</feature>
<feature type="active site" description="Proton acceptor" evidence="2">
    <location>
        <position position="135"/>
    </location>
</feature>
<feature type="active site" description="Proton acceptor" evidence="2">
    <location>
        <position position="167"/>
    </location>
</feature>
<feature type="binding site" evidence="2">
    <location>
        <begin position="11"/>
        <end position="12"/>
    </location>
    <ligand>
        <name>NAD(+)</name>
        <dbReference type="ChEBI" id="CHEBI:57540"/>
    </ligand>
</feature>
<feature type="binding site" evidence="2">
    <location>
        <begin position="32"/>
        <end position="35"/>
    </location>
    <ligand>
        <name>NAD(+)</name>
        <dbReference type="ChEBI" id="CHEBI:57540"/>
    </ligand>
</feature>
<feature type="binding site" evidence="2">
    <location>
        <begin position="58"/>
        <end position="59"/>
    </location>
    <ligand>
        <name>NAD(+)</name>
        <dbReference type="ChEBI" id="CHEBI:57540"/>
    </ligand>
</feature>
<feature type="binding site" evidence="2">
    <location>
        <begin position="80"/>
        <end position="84"/>
    </location>
    <ligand>
        <name>NAD(+)</name>
        <dbReference type="ChEBI" id="CHEBI:57540"/>
    </ligand>
</feature>
<feature type="binding site" evidence="1">
    <location>
        <position position="84"/>
    </location>
    <ligand>
        <name>substrate</name>
    </ligand>
</feature>
<feature type="binding site" evidence="2">
    <location>
        <position position="99"/>
    </location>
    <ligand>
        <name>NAD(+)</name>
        <dbReference type="ChEBI" id="CHEBI:57540"/>
    </ligand>
</feature>
<feature type="binding site" evidence="1">
    <location>
        <position position="133"/>
    </location>
    <ligand>
        <name>substrate</name>
    </ligand>
</feature>
<feature type="binding site" evidence="2">
    <location>
        <begin position="167"/>
        <end position="171"/>
    </location>
    <ligand>
        <name>NAD(+)</name>
        <dbReference type="ChEBI" id="CHEBI:57540"/>
    </ligand>
</feature>
<feature type="binding site" evidence="1">
    <location>
        <position position="196"/>
    </location>
    <ligand>
        <name>substrate</name>
    </ligand>
</feature>
<feature type="binding site" evidence="2">
    <location>
        <position position="197"/>
    </location>
    <ligand>
        <name>NAD(+)</name>
        <dbReference type="ChEBI" id="CHEBI:57540"/>
    </ligand>
</feature>
<feature type="binding site" evidence="1">
    <location>
        <begin position="206"/>
        <end position="207"/>
    </location>
    <ligand>
        <name>substrate</name>
    </ligand>
</feature>
<feature type="binding site" evidence="1">
    <location>
        <begin position="222"/>
        <end position="224"/>
    </location>
    <ligand>
        <name>substrate</name>
    </ligand>
</feature>
<feature type="binding site" evidence="1">
    <location>
        <position position="231"/>
    </location>
    <ligand>
        <name>substrate</name>
    </ligand>
</feature>
<feature type="binding site" evidence="1">
    <location>
        <position position="266"/>
    </location>
    <ligand>
        <name>substrate</name>
    </ligand>
</feature>
<feature type="binding site" evidence="1">
    <location>
        <begin position="296"/>
        <end position="300"/>
    </location>
    <ligand>
        <name>substrate</name>
    </ligand>
</feature>
<feature type="sequence conflict" description="In Ref. 1; CAA50767." evidence="4" ref="1">
    <original>L</original>
    <variation>P</variation>
    <location>
        <position position="4"/>
    </location>
</feature>
<feature type="sequence conflict" description="In Ref. 1; CAA50767." evidence="4" ref="1">
    <original>AQHQPDA</original>
    <variation>RTAPARR</variation>
    <location>
        <begin position="70"/>
        <end position="76"/>
    </location>
</feature>
<feature type="sequence conflict" description="In Ref. 1; CAA50767." evidence="4" ref="1">
    <original>A</original>
    <variation>T</variation>
    <location>
        <position position="151"/>
    </location>
</feature>
<feature type="sequence conflict" description="In Ref. 1; CAA50767." evidence="4" ref="1">
    <original>AYAPS</original>
    <variation>TKRQN</variation>
    <location>
        <begin position="160"/>
        <end position="164"/>
    </location>
</feature>
<feature type="sequence conflict" description="In Ref. 1; CAA50767." evidence="4" ref="1">
    <original>S</original>
    <variation>N</variation>
    <location>
        <position position="174"/>
    </location>
</feature>
<name>RMLB_SHIFL</name>
<sequence length="361" mass="40575">MKILVTGGAGFIGSAVVRHIINNTQDSVVNVDKLTYAGNLESLADVSDSERYAFEHADICDAVAMSRIFAQHQPDAVMHLAAESHVDRSITGPAAFIETNIVGTYVLLEAARNYWSALNDEKKKSFRFHHISTDEVYGDLPHPDEANNNEALPLFTETTAYAPSSPYSASKASSDHLVRAWKRTYGLPTIVTNCSNNYGPYHFPEKLIPLVILNALEGKALPIYGKGDQIRDWLYVEDHARALYTVVTEGKAGETYNIGGHNEKKNIDVVLTICDLLDEIVPKEKSYREQITYVADRPGHDRRYAIDADKISRELGWKPQETFESGIRKTVEWYLANTNWVENVKSGTYQSWIEQNYEGRQ</sequence>
<keyword id="KW-0448">Lipopolysaccharide biosynthesis</keyword>
<keyword id="KW-0456">Lyase</keyword>
<keyword id="KW-0520">NAD</keyword>
<keyword id="KW-1185">Reference proteome</keyword>